<protein>
    <recommendedName>
        <fullName evidence="1">1-deoxy-D-xylulose-5-phosphate synthase</fullName>
        <ecNumber evidence="1">2.2.1.7</ecNumber>
    </recommendedName>
    <alternativeName>
        <fullName evidence="1">1-deoxyxylulose-5-phosphate synthase</fullName>
        <shortName evidence="1">DXP synthase</shortName>
        <shortName evidence="1">DXPS</shortName>
    </alternativeName>
</protein>
<dbReference type="EC" id="2.2.1.7" evidence="1"/>
<dbReference type="EMBL" id="CP000239">
    <property type="protein sequence ID" value="ABC99857.1"/>
    <property type="molecule type" value="Genomic_DNA"/>
</dbReference>
<dbReference type="RefSeq" id="WP_011430533.1">
    <property type="nucleotide sequence ID" value="NC_007775.1"/>
</dbReference>
<dbReference type="SMR" id="Q2JTX2"/>
<dbReference type="STRING" id="321327.CYA_1701"/>
<dbReference type="KEGG" id="cya:CYA_1701"/>
<dbReference type="eggNOG" id="COG1154">
    <property type="taxonomic scope" value="Bacteria"/>
</dbReference>
<dbReference type="HOGENOM" id="CLU_009227_1_4_3"/>
<dbReference type="OrthoDB" id="9803371at2"/>
<dbReference type="UniPathway" id="UPA00064">
    <property type="reaction ID" value="UER00091"/>
</dbReference>
<dbReference type="Proteomes" id="UP000008818">
    <property type="component" value="Chromosome"/>
</dbReference>
<dbReference type="GO" id="GO:0005829">
    <property type="term" value="C:cytosol"/>
    <property type="evidence" value="ECO:0007669"/>
    <property type="project" value="TreeGrafter"/>
</dbReference>
<dbReference type="GO" id="GO:0008661">
    <property type="term" value="F:1-deoxy-D-xylulose-5-phosphate synthase activity"/>
    <property type="evidence" value="ECO:0007669"/>
    <property type="project" value="UniProtKB-UniRule"/>
</dbReference>
<dbReference type="GO" id="GO:0000287">
    <property type="term" value="F:magnesium ion binding"/>
    <property type="evidence" value="ECO:0007669"/>
    <property type="project" value="UniProtKB-UniRule"/>
</dbReference>
<dbReference type="GO" id="GO:0030976">
    <property type="term" value="F:thiamine pyrophosphate binding"/>
    <property type="evidence" value="ECO:0007669"/>
    <property type="project" value="UniProtKB-UniRule"/>
</dbReference>
<dbReference type="GO" id="GO:0052865">
    <property type="term" value="P:1-deoxy-D-xylulose 5-phosphate biosynthetic process"/>
    <property type="evidence" value="ECO:0007669"/>
    <property type="project" value="UniProtKB-UniPathway"/>
</dbReference>
<dbReference type="GO" id="GO:0019288">
    <property type="term" value="P:isopentenyl diphosphate biosynthetic process, methylerythritol 4-phosphate pathway"/>
    <property type="evidence" value="ECO:0007669"/>
    <property type="project" value="TreeGrafter"/>
</dbReference>
<dbReference type="GO" id="GO:0016114">
    <property type="term" value="P:terpenoid biosynthetic process"/>
    <property type="evidence" value="ECO:0007669"/>
    <property type="project" value="UniProtKB-UniRule"/>
</dbReference>
<dbReference type="GO" id="GO:0009228">
    <property type="term" value="P:thiamine biosynthetic process"/>
    <property type="evidence" value="ECO:0007669"/>
    <property type="project" value="UniProtKB-UniRule"/>
</dbReference>
<dbReference type="CDD" id="cd02007">
    <property type="entry name" value="TPP_DXS"/>
    <property type="match status" value="1"/>
</dbReference>
<dbReference type="CDD" id="cd07033">
    <property type="entry name" value="TPP_PYR_DXS_TK_like"/>
    <property type="match status" value="1"/>
</dbReference>
<dbReference type="FunFam" id="3.40.50.920:FF:000002">
    <property type="entry name" value="1-deoxy-D-xylulose-5-phosphate synthase"/>
    <property type="match status" value="1"/>
</dbReference>
<dbReference type="FunFam" id="3.40.50.970:FF:000005">
    <property type="entry name" value="1-deoxy-D-xylulose-5-phosphate synthase"/>
    <property type="match status" value="1"/>
</dbReference>
<dbReference type="Gene3D" id="3.40.50.920">
    <property type="match status" value="1"/>
</dbReference>
<dbReference type="Gene3D" id="3.40.50.970">
    <property type="match status" value="2"/>
</dbReference>
<dbReference type="HAMAP" id="MF_00315">
    <property type="entry name" value="DXP_synth"/>
    <property type="match status" value="1"/>
</dbReference>
<dbReference type="InterPro" id="IPR005477">
    <property type="entry name" value="Dxylulose-5-P_synthase"/>
</dbReference>
<dbReference type="InterPro" id="IPR029061">
    <property type="entry name" value="THDP-binding"/>
</dbReference>
<dbReference type="InterPro" id="IPR009014">
    <property type="entry name" value="Transketo_C/PFOR_II"/>
</dbReference>
<dbReference type="InterPro" id="IPR005475">
    <property type="entry name" value="Transketolase-like_Pyr-bd"/>
</dbReference>
<dbReference type="InterPro" id="IPR020826">
    <property type="entry name" value="Transketolase_BS"/>
</dbReference>
<dbReference type="InterPro" id="IPR033248">
    <property type="entry name" value="Transketolase_C"/>
</dbReference>
<dbReference type="NCBIfam" id="TIGR00204">
    <property type="entry name" value="dxs"/>
    <property type="match status" value="1"/>
</dbReference>
<dbReference type="NCBIfam" id="NF003933">
    <property type="entry name" value="PRK05444.2-2"/>
    <property type="match status" value="1"/>
</dbReference>
<dbReference type="PANTHER" id="PTHR43322">
    <property type="entry name" value="1-D-DEOXYXYLULOSE 5-PHOSPHATE SYNTHASE-RELATED"/>
    <property type="match status" value="1"/>
</dbReference>
<dbReference type="PANTHER" id="PTHR43322:SF5">
    <property type="entry name" value="1-DEOXY-D-XYLULOSE-5-PHOSPHATE SYNTHASE, CHLOROPLASTIC"/>
    <property type="match status" value="1"/>
</dbReference>
<dbReference type="Pfam" id="PF13292">
    <property type="entry name" value="DXP_synthase_N"/>
    <property type="match status" value="1"/>
</dbReference>
<dbReference type="Pfam" id="PF02779">
    <property type="entry name" value="Transket_pyr"/>
    <property type="match status" value="1"/>
</dbReference>
<dbReference type="Pfam" id="PF02780">
    <property type="entry name" value="Transketolase_C"/>
    <property type="match status" value="1"/>
</dbReference>
<dbReference type="SMART" id="SM00861">
    <property type="entry name" value="Transket_pyr"/>
    <property type="match status" value="1"/>
</dbReference>
<dbReference type="SUPFAM" id="SSF52518">
    <property type="entry name" value="Thiamin diphosphate-binding fold (THDP-binding)"/>
    <property type="match status" value="2"/>
</dbReference>
<dbReference type="SUPFAM" id="SSF52922">
    <property type="entry name" value="TK C-terminal domain-like"/>
    <property type="match status" value="1"/>
</dbReference>
<dbReference type="PROSITE" id="PS00802">
    <property type="entry name" value="TRANSKETOLASE_2"/>
    <property type="match status" value="1"/>
</dbReference>
<accession>Q2JTX2</accession>
<organism>
    <name type="scientific">Synechococcus sp. (strain JA-3-3Ab)</name>
    <name type="common">Cyanobacteria bacterium Yellowstone A-Prime</name>
    <dbReference type="NCBI Taxonomy" id="321327"/>
    <lineage>
        <taxon>Bacteria</taxon>
        <taxon>Bacillati</taxon>
        <taxon>Cyanobacteriota</taxon>
        <taxon>Cyanophyceae</taxon>
        <taxon>Synechococcales</taxon>
        <taxon>Synechococcaceae</taxon>
        <taxon>Synechococcus</taxon>
    </lineage>
</organism>
<sequence length="649" mass="70060">MHLSEITHPNQLRNLSLSQLRSLARQIREKHLQTAANSPVGCHLGPGLGVVELTLALYKTLDLDRDKVIWDVGHQAYAHKMLTGRYHNFHTIRQKGGISGYLKRSESRFDHFGAGHASTSISAALGMAIARDRRGENFKVVAIIGDGALTGGMAYEAINHAGHLPKTNLMVILNDNGMSISPNVGAIPRYLNRLRLSPPVQFLADSLEEQLKNLPLVGSSLSPEIDRLKETVKLVTAVQNNKAGIIFEELGFTYVGPVDGHNLAELLDAFELAHGISGPVLVHVATVKGKGYPPAEAEQVSYHAQSRFDLATGKPYPPTKPTPPSYSKVFGHTLCKLAERDPRIIGITAAMDTGTGLDKLKEKLPDQFVDVGIAEQHAVTLAAGMACEGMRPVVAIYSTFLQRAYDQIIHDVCIQKLPVFFCLDRAGVVGADGPTHQGMYDIAYLRCIPEMVLMAPKDEAELQRMVVTGIQYTKGPIAMRYPRGAGVGVPLAEEGWEPIPIGKAEVLRSGGEVLILAYGSMVHPSLQAAEILKEHGISTTVVNARFAKPLDTELILPLAQQSRLVVTVEEGCLMGGFGSAVGEALLDADIRVPLLRLGVPDVWVEHATPEESLAELGLNSVGIAERIRAKVEALQGQRASQAQAILGSS</sequence>
<feature type="chain" id="PRO_0000256492" description="1-deoxy-D-xylulose-5-phosphate synthase">
    <location>
        <begin position="1"/>
        <end position="649"/>
    </location>
</feature>
<feature type="binding site" evidence="1">
    <location>
        <position position="74"/>
    </location>
    <ligand>
        <name>thiamine diphosphate</name>
        <dbReference type="ChEBI" id="CHEBI:58937"/>
    </ligand>
</feature>
<feature type="binding site" evidence="1">
    <location>
        <begin position="115"/>
        <end position="117"/>
    </location>
    <ligand>
        <name>thiamine diphosphate</name>
        <dbReference type="ChEBI" id="CHEBI:58937"/>
    </ligand>
</feature>
<feature type="binding site" evidence="1">
    <location>
        <position position="146"/>
    </location>
    <ligand>
        <name>Mg(2+)</name>
        <dbReference type="ChEBI" id="CHEBI:18420"/>
    </ligand>
</feature>
<feature type="binding site" evidence="1">
    <location>
        <begin position="147"/>
        <end position="148"/>
    </location>
    <ligand>
        <name>thiamine diphosphate</name>
        <dbReference type="ChEBI" id="CHEBI:58937"/>
    </ligand>
</feature>
<feature type="binding site" evidence="1">
    <location>
        <position position="176"/>
    </location>
    <ligand>
        <name>Mg(2+)</name>
        <dbReference type="ChEBI" id="CHEBI:18420"/>
    </ligand>
</feature>
<feature type="binding site" evidence="1">
    <location>
        <position position="176"/>
    </location>
    <ligand>
        <name>thiamine diphosphate</name>
        <dbReference type="ChEBI" id="CHEBI:58937"/>
    </ligand>
</feature>
<feature type="binding site" evidence="1">
    <location>
        <position position="292"/>
    </location>
    <ligand>
        <name>thiamine diphosphate</name>
        <dbReference type="ChEBI" id="CHEBI:58937"/>
    </ligand>
</feature>
<feature type="binding site" evidence="1">
    <location>
        <position position="375"/>
    </location>
    <ligand>
        <name>thiamine diphosphate</name>
        <dbReference type="ChEBI" id="CHEBI:58937"/>
    </ligand>
</feature>
<name>DXS_SYNJA</name>
<keyword id="KW-0414">Isoprene biosynthesis</keyword>
<keyword id="KW-0460">Magnesium</keyword>
<keyword id="KW-0479">Metal-binding</keyword>
<keyword id="KW-0784">Thiamine biosynthesis</keyword>
<keyword id="KW-0786">Thiamine pyrophosphate</keyword>
<keyword id="KW-0808">Transferase</keyword>
<proteinExistence type="inferred from homology"/>
<reference key="1">
    <citation type="journal article" date="2007" name="ISME J.">
        <title>Population level functional diversity in a microbial community revealed by comparative genomic and metagenomic analyses.</title>
        <authorList>
            <person name="Bhaya D."/>
            <person name="Grossman A.R."/>
            <person name="Steunou A.-S."/>
            <person name="Khuri N."/>
            <person name="Cohan F.M."/>
            <person name="Hamamura N."/>
            <person name="Melendrez M.C."/>
            <person name="Bateson M.M."/>
            <person name="Ward D.M."/>
            <person name="Heidelberg J.F."/>
        </authorList>
    </citation>
    <scope>NUCLEOTIDE SEQUENCE [LARGE SCALE GENOMIC DNA]</scope>
    <source>
        <strain>JA-3-3Ab</strain>
    </source>
</reference>
<comment type="function">
    <text evidence="1">Catalyzes the acyloin condensation reaction between C atoms 2 and 3 of pyruvate and glyceraldehyde 3-phosphate to yield 1-deoxy-D-xylulose-5-phosphate (DXP).</text>
</comment>
<comment type="catalytic activity">
    <reaction evidence="1">
        <text>D-glyceraldehyde 3-phosphate + pyruvate + H(+) = 1-deoxy-D-xylulose 5-phosphate + CO2</text>
        <dbReference type="Rhea" id="RHEA:12605"/>
        <dbReference type="ChEBI" id="CHEBI:15361"/>
        <dbReference type="ChEBI" id="CHEBI:15378"/>
        <dbReference type="ChEBI" id="CHEBI:16526"/>
        <dbReference type="ChEBI" id="CHEBI:57792"/>
        <dbReference type="ChEBI" id="CHEBI:59776"/>
        <dbReference type="EC" id="2.2.1.7"/>
    </reaction>
</comment>
<comment type="cofactor">
    <cofactor evidence="1">
        <name>Mg(2+)</name>
        <dbReference type="ChEBI" id="CHEBI:18420"/>
    </cofactor>
    <text evidence="1">Binds 1 Mg(2+) ion per subunit.</text>
</comment>
<comment type="cofactor">
    <cofactor evidence="1">
        <name>thiamine diphosphate</name>
        <dbReference type="ChEBI" id="CHEBI:58937"/>
    </cofactor>
    <text evidence="1">Binds 1 thiamine pyrophosphate per subunit.</text>
</comment>
<comment type="pathway">
    <text evidence="1">Metabolic intermediate biosynthesis; 1-deoxy-D-xylulose 5-phosphate biosynthesis; 1-deoxy-D-xylulose 5-phosphate from D-glyceraldehyde 3-phosphate and pyruvate: step 1/1.</text>
</comment>
<comment type="subunit">
    <text evidence="1">Homodimer.</text>
</comment>
<comment type="similarity">
    <text evidence="1">Belongs to the transketolase family. DXPS subfamily.</text>
</comment>
<gene>
    <name evidence="1" type="primary">dxs</name>
    <name type="ordered locus">CYA_1701</name>
</gene>
<evidence type="ECO:0000255" key="1">
    <source>
        <dbReference type="HAMAP-Rule" id="MF_00315"/>
    </source>
</evidence>